<reference key="1">
    <citation type="submission" date="2005-06" db="EMBL/GenBank/DDBJ databases">
        <title>Atypical molecular evolution of afrotherian and xenarthran beta-globin cluster genes.</title>
        <authorList>
            <person name="Sloan A.M."/>
            <person name="Campbell K.L."/>
        </authorList>
    </citation>
    <scope>NUCLEOTIDE SEQUENCE [GENOMIC DNA]</scope>
</reference>
<organism>
    <name type="scientific">Loxodonta africana</name>
    <name type="common">African elephant</name>
    <dbReference type="NCBI Taxonomy" id="9785"/>
    <lineage>
        <taxon>Eukaryota</taxon>
        <taxon>Metazoa</taxon>
        <taxon>Chordata</taxon>
        <taxon>Craniata</taxon>
        <taxon>Vertebrata</taxon>
        <taxon>Euteleostomi</taxon>
        <taxon>Mammalia</taxon>
        <taxon>Eutheria</taxon>
        <taxon>Afrotheria</taxon>
        <taxon>Proboscidea</taxon>
        <taxon>Elephantidae</taxon>
        <taxon>Loxodonta</taxon>
    </lineage>
</organism>
<feature type="chain" id="PRO_0000053179" description="Hemoglobin subunit delta">
    <location>
        <begin position="1"/>
        <end position="147"/>
    </location>
</feature>
<feature type="domain" description="Globin" evidence="1">
    <location>
        <begin position="3"/>
        <end position="147"/>
    </location>
</feature>
<feature type="binding site" description="distal binding residue">
    <location>
        <position position="64"/>
    </location>
    <ligand>
        <name>heme b</name>
        <dbReference type="ChEBI" id="CHEBI:60344"/>
    </ligand>
    <ligandPart>
        <name>Fe</name>
        <dbReference type="ChEBI" id="CHEBI:18248"/>
    </ligandPart>
</feature>
<feature type="binding site" description="proximal binding residue">
    <location>
        <position position="93"/>
    </location>
    <ligand>
        <name>heme b</name>
        <dbReference type="ChEBI" id="CHEBI:60344"/>
    </ligand>
    <ligandPart>
        <name>Fe</name>
        <dbReference type="ChEBI" id="CHEBI:18248"/>
    </ligandPart>
</feature>
<dbReference type="EMBL" id="DQ091201">
    <property type="protein sequence ID" value="AAZ22674.1"/>
    <property type="molecule type" value="Genomic_DNA"/>
</dbReference>
<dbReference type="RefSeq" id="NP_001267811.1">
    <property type="nucleotide sequence ID" value="NM_001280882.1"/>
</dbReference>
<dbReference type="SMR" id="Q45XJ0"/>
<dbReference type="STRING" id="9785.ENSLAFP00000016279"/>
<dbReference type="Ensembl" id="ENSLAFT00000023144.2">
    <property type="protein sequence ID" value="ENSLAFP00000016279.2"/>
    <property type="gene ID" value="ENSLAFG00000021656.2"/>
</dbReference>
<dbReference type="GeneID" id="100568295"/>
<dbReference type="KEGG" id="lav:100568295"/>
<dbReference type="CTD" id="100568295"/>
<dbReference type="eggNOG" id="KOG3378">
    <property type="taxonomic scope" value="Eukaryota"/>
</dbReference>
<dbReference type="GeneTree" id="ENSGT00940000156216"/>
<dbReference type="HOGENOM" id="CLU_003827_10_0_1"/>
<dbReference type="InParanoid" id="Q45XJ0"/>
<dbReference type="OrthoDB" id="9886081at2759"/>
<dbReference type="TreeFam" id="TF333268"/>
<dbReference type="Proteomes" id="UP000007646">
    <property type="component" value="Unassembled WGS sequence"/>
</dbReference>
<dbReference type="GO" id="GO:0072562">
    <property type="term" value="C:blood microparticle"/>
    <property type="evidence" value="ECO:0007669"/>
    <property type="project" value="TreeGrafter"/>
</dbReference>
<dbReference type="GO" id="GO:0031838">
    <property type="term" value="C:haptoglobin-hemoglobin complex"/>
    <property type="evidence" value="ECO:0007669"/>
    <property type="project" value="TreeGrafter"/>
</dbReference>
<dbReference type="GO" id="GO:0005833">
    <property type="term" value="C:hemoglobin complex"/>
    <property type="evidence" value="ECO:0007669"/>
    <property type="project" value="InterPro"/>
</dbReference>
<dbReference type="GO" id="GO:0031720">
    <property type="term" value="F:haptoglobin binding"/>
    <property type="evidence" value="ECO:0007669"/>
    <property type="project" value="TreeGrafter"/>
</dbReference>
<dbReference type="GO" id="GO:0020037">
    <property type="term" value="F:heme binding"/>
    <property type="evidence" value="ECO:0007669"/>
    <property type="project" value="InterPro"/>
</dbReference>
<dbReference type="GO" id="GO:0031721">
    <property type="term" value="F:hemoglobin alpha binding"/>
    <property type="evidence" value="ECO:0007669"/>
    <property type="project" value="TreeGrafter"/>
</dbReference>
<dbReference type="GO" id="GO:0046872">
    <property type="term" value="F:metal ion binding"/>
    <property type="evidence" value="ECO:0007669"/>
    <property type="project" value="UniProtKB-KW"/>
</dbReference>
<dbReference type="GO" id="GO:0043177">
    <property type="term" value="F:organic acid binding"/>
    <property type="evidence" value="ECO:0007669"/>
    <property type="project" value="TreeGrafter"/>
</dbReference>
<dbReference type="GO" id="GO:0019825">
    <property type="term" value="F:oxygen binding"/>
    <property type="evidence" value="ECO:0007669"/>
    <property type="project" value="InterPro"/>
</dbReference>
<dbReference type="GO" id="GO:0005344">
    <property type="term" value="F:oxygen carrier activity"/>
    <property type="evidence" value="ECO:0007669"/>
    <property type="project" value="UniProtKB-KW"/>
</dbReference>
<dbReference type="GO" id="GO:0004601">
    <property type="term" value="F:peroxidase activity"/>
    <property type="evidence" value="ECO:0007669"/>
    <property type="project" value="TreeGrafter"/>
</dbReference>
<dbReference type="GO" id="GO:0042744">
    <property type="term" value="P:hydrogen peroxide catabolic process"/>
    <property type="evidence" value="ECO:0007669"/>
    <property type="project" value="TreeGrafter"/>
</dbReference>
<dbReference type="CDD" id="cd08925">
    <property type="entry name" value="Hb-beta-like"/>
    <property type="match status" value="1"/>
</dbReference>
<dbReference type="FunFam" id="1.10.490.10:FF:000001">
    <property type="entry name" value="Hemoglobin subunit beta"/>
    <property type="match status" value="1"/>
</dbReference>
<dbReference type="Gene3D" id="1.10.490.10">
    <property type="entry name" value="Globins"/>
    <property type="match status" value="1"/>
</dbReference>
<dbReference type="InterPro" id="IPR000971">
    <property type="entry name" value="Globin"/>
</dbReference>
<dbReference type="InterPro" id="IPR009050">
    <property type="entry name" value="Globin-like_sf"/>
</dbReference>
<dbReference type="InterPro" id="IPR012292">
    <property type="entry name" value="Globin/Proto"/>
</dbReference>
<dbReference type="InterPro" id="IPR002337">
    <property type="entry name" value="Hemoglobin_b"/>
</dbReference>
<dbReference type="InterPro" id="IPR050056">
    <property type="entry name" value="Hemoglobin_oxygen_transport"/>
</dbReference>
<dbReference type="PANTHER" id="PTHR11442">
    <property type="entry name" value="HEMOGLOBIN FAMILY MEMBER"/>
    <property type="match status" value="1"/>
</dbReference>
<dbReference type="PANTHER" id="PTHR11442:SF42">
    <property type="entry name" value="HEMOGLOBIN SUBUNIT BETA"/>
    <property type="match status" value="1"/>
</dbReference>
<dbReference type="Pfam" id="PF00042">
    <property type="entry name" value="Globin"/>
    <property type="match status" value="1"/>
</dbReference>
<dbReference type="PRINTS" id="PR00814">
    <property type="entry name" value="BETAHAEM"/>
</dbReference>
<dbReference type="SUPFAM" id="SSF46458">
    <property type="entry name" value="Globin-like"/>
    <property type="match status" value="1"/>
</dbReference>
<dbReference type="PROSITE" id="PS01033">
    <property type="entry name" value="GLOBIN"/>
    <property type="match status" value="1"/>
</dbReference>
<proteinExistence type="evidence at transcript level"/>
<evidence type="ECO:0000255" key="1">
    <source>
        <dbReference type="PROSITE-ProRule" id="PRU00238"/>
    </source>
</evidence>
<accession>Q45XJ0</accession>
<gene>
    <name type="primary">HBD</name>
</gene>
<sequence>MVNLTAAEKTQVTNLWGKVNVKELGGEALSRLLVVYPWTRRFFEHFGDLSTAEAVLHNAKVLAHGEKVLTSFGEGLKHLDNLKGTFADLSELHCDKLHVDPENFRLLGNVLVIVLARHFGKEFTPDVQAAYEKVVAGVANALAHKYH</sequence>
<comment type="subunit">
    <text>Heterotetramer of two delta chains and two alpha chains.</text>
</comment>
<comment type="tissue specificity">
    <text>Red blood cells.</text>
</comment>
<comment type="similarity">
    <text evidence="1">Belongs to the globin family.</text>
</comment>
<protein>
    <recommendedName>
        <fullName>Hemoglobin subunit delta</fullName>
    </recommendedName>
    <alternativeName>
        <fullName>Delta-globin</fullName>
    </alternativeName>
    <alternativeName>
        <fullName>Hemoglobin delta chain</fullName>
    </alternativeName>
</protein>
<name>HBD_LOXAF</name>
<keyword id="KW-0349">Heme</keyword>
<keyword id="KW-0408">Iron</keyword>
<keyword id="KW-0479">Metal-binding</keyword>
<keyword id="KW-0561">Oxygen transport</keyword>
<keyword id="KW-1185">Reference proteome</keyword>
<keyword id="KW-0813">Transport</keyword>